<accession>P0AGA6</accession>
<accession>P10940</accession>
<accession>Q2M7Y2</accession>
<reference key="1">
    <citation type="journal article" date="1987" name="J. Bacteriol.">
        <title>Nucleotide sequence of the uhp region of Escherichia coli.</title>
        <authorList>
            <person name="Friedrich M.J."/>
            <person name="Kadner R.J."/>
        </authorList>
    </citation>
    <scope>NUCLEOTIDE SEQUENCE [GENOMIC DNA]</scope>
</reference>
<reference key="2">
    <citation type="journal article" date="1992" name="J. Bacteriol.">
        <title>Structure and function of the uhp genes for the sugar phosphate transport system in Escherichia coli and Salmonella typhimurium.</title>
        <authorList>
            <person name="Island M.D."/>
            <person name="Wei B.-Y."/>
            <person name="Kadner R.J."/>
        </authorList>
    </citation>
    <scope>NUCLEOTIDE SEQUENCE [GENOMIC DNA]</scope>
</reference>
<reference key="3">
    <citation type="journal article" date="1993" name="Genomics">
        <title>DNA sequence and analysis of 136 kilobases of the Escherichia coli genome: organizational symmetry around the origin of replication.</title>
        <authorList>
            <person name="Burland V.D."/>
            <person name="Plunkett G. III"/>
            <person name="Daniels D.L."/>
            <person name="Blattner F.R."/>
        </authorList>
    </citation>
    <scope>NUCLEOTIDE SEQUENCE [LARGE SCALE GENOMIC DNA]</scope>
    <source>
        <strain>K12 / MG1655 / ATCC 47076</strain>
    </source>
</reference>
<reference key="4">
    <citation type="journal article" date="1997" name="Science">
        <title>The complete genome sequence of Escherichia coli K-12.</title>
        <authorList>
            <person name="Blattner F.R."/>
            <person name="Plunkett G. III"/>
            <person name="Bloch C.A."/>
            <person name="Perna N.T."/>
            <person name="Burland V."/>
            <person name="Riley M."/>
            <person name="Collado-Vides J."/>
            <person name="Glasner J.D."/>
            <person name="Rode C.K."/>
            <person name="Mayhew G.F."/>
            <person name="Gregor J."/>
            <person name="Davis N.W."/>
            <person name="Kirkpatrick H.A."/>
            <person name="Goeden M.A."/>
            <person name="Rose D.J."/>
            <person name="Mau B."/>
            <person name="Shao Y."/>
        </authorList>
    </citation>
    <scope>NUCLEOTIDE SEQUENCE [LARGE SCALE GENOMIC DNA]</scope>
    <source>
        <strain>K12 / MG1655 / ATCC 47076</strain>
    </source>
</reference>
<reference key="5">
    <citation type="journal article" date="2006" name="Mol. Syst. Biol.">
        <title>Highly accurate genome sequences of Escherichia coli K-12 strains MG1655 and W3110.</title>
        <authorList>
            <person name="Hayashi K."/>
            <person name="Morooka N."/>
            <person name="Yamamoto Y."/>
            <person name="Fujita K."/>
            <person name="Isono K."/>
            <person name="Choi S."/>
            <person name="Ohtsubo E."/>
            <person name="Baba T."/>
            <person name="Wanner B.L."/>
            <person name="Mori H."/>
            <person name="Horiuchi T."/>
        </authorList>
    </citation>
    <scope>NUCLEOTIDE SEQUENCE [LARGE SCALE GENOMIC DNA]</scope>
    <source>
        <strain>K12 / W3110 / ATCC 27325 / DSM 5911</strain>
    </source>
</reference>
<reference key="6">
    <citation type="journal article" date="1997" name="J. Biol. Chem.">
        <title>Protein phosphorylation affects binding of the Escherichia coli transcription activator UhpA to the uhpT promoter.</title>
        <authorList>
            <person name="Dahl J.L."/>
            <person name="Wei B.Y."/>
            <person name="Kadner R.J."/>
        </authorList>
    </citation>
    <scope>PROTEIN SEQUENCE OF 1-20</scope>
    <scope>FUNCTION</scope>
    <scope>ACTIVITY REGULATION</scope>
    <scope>PHOSPHORYLATION AT ASP-54</scope>
    <scope>MUTAGENESIS OF ASP-54</scope>
</reference>
<reference key="7">
    <citation type="journal article" date="1987" name="J. Bacteriol.">
        <title>Identification of uhp polypeptides and evidence for their role in exogenous induction of the sugar phosphate transport system of Escherichia coli K-12.</title>
        <authorList>
            <person name="Weston L.A."/>
            <person name="Kadner R.J."/>
        </authorList>
    </citation>
    <scope>FUNCTION</scope>
</reference>
<reference key="8">
    <citation type="journal article" date="1997" name="Electrophoresis">
        <title>Escherichia coli proteome analysis using the gene-protein database.</title>
        <authorList>
            <person name="VanBogelen R.A."/>
            <person name="Abshire K.Z."/>
            <person name="Moldover B."/>
            <person name="Olson E.R."/>
            <person name="Neidhardt F.C."/>
        </authorList>
    </citation>
    <scope>IDENTIFICATION BY 2D-GEL</scope>
</reference>
<reference key="9">
    <citation type="journal article" date="2000" name="J. Bacteriol.">
        <title>The histidine kinase domain of UhpB inhibits UhpA action at the Escherichia coli uhpT promoter.</title>
        <authorList>
            <person name="Wright J.S."/>
            <person name="Olekhnovich I.N."/>
            <person name="Touchie G."/>
            <person name="Kadner R.J."/>
        </authorList>
    </citation>
    <scope>PHOSPHORYLATION BY UHPB</scope>
</reference>
<reference key="10">
    <citation type="journal article" date="2001" name="Microbiology">
        <title>Glucose-6-phosphate-dependent phosphoryl flow through the Uhp two-component regulatory system.</title>
        <authorList>
            <person name="Verhamme D.T."/>
            <person name="Arents J.C."/>
            <person name="Postma P.W."/>
            <person name="Crielaard W."/>
            <person name="Hellingwerf K.J."/>
        </authorList>
    </citation>
    <scope>PHOSPHORYLATION AND DEPHOSPHORYLATION BY UHPB</scope>
</reference>
<feature type="chain" id="PRO_0000081257" description="Transcriptional regulatory protein UhpA">
    <location>
        <begin position="1"/>
        <end position="196"/>
    </location>
</feature>
<feature type="domain" description="Response regulatory" evidence="1">
    <location>
        <begin position="3"/>
        <end position="116"/>
    </location>
</feature>
<feature type="domain" description="HTH luxR-type" evidence="2">
    <location>
        <begin position="131"/>
        <end position="196"/>
    </location>
</feature>
<feature type="DNA-binding region" description="H-T-H motif" evidence="2">
    <location>
        <begin position="155"/>
        <end position="174"/>
    </location>
</feature>
<feature type="modified residue" description="4-aspartylphosphate" evidence="1 6">
    <location>
        <position position="54"/>
    </location>
</feature>
<feature type="mutagenesis site" description="Lack of phosphorylation." evidence="6">
    <original>D</original>
    <variation>N</variation>
    <location>
        <position position="54"/>
    </location>
</feature>
<dbReference type="EMBL" id="M17102">
    <property type="protein sequence ID" value="AAA24720.1"/>
    <property type="molecule type" value="Genomic_DNA"/>
</dbReference>
<dbReference type="EMBL" id="M89479">
    <property type="protein sequence ID" value="AAA24724.1"/>
    <property type="molecule type" value="Genomic_DNA"/>
</dbReference>
<dbReference type="EMBL" id="L10328">
    <property type="protein sequence ID" value="AAA62021.1"/>
    <property type="molecule type" value="Genomic_DNA"/>
</dbReference>
<dbReference type="EMBL" id="U00096">
    <property type="protein sequence ID" value="AAC76692.1"/>
    <property type="molecule type" value="Genomic_DNA"/>
</dbReference>
<dbReference type="EMBL" id="AP009048">
    <property type="protein sequence ID" value="BAE77624.1"/>
    <property type="molecule type" value="Genomic_DNA"/>
</dbReference>
<dbReference type="PIR" id="A26925">
    <property type="entry name" value="BVECAU"/>
</dbReference>
<dbReference type="RefSeq" id="NP_418125.1">
    <property type="nucleotide sequence ID" value="NC_000913.3"/>
</dbReference>
<dbReference type="RefSeq" id="WP_000633668.1">
    <property type="nucleotide sequence ID" value="NZ_STEB01000015.1"/>
</dbReference>
<dbReference type="SMR" id="P0AGA6"/>
<dbReference type="BioGRID" id="4262584">
    <property type="interactions" value="118"/>
</dbReference>
<dbReference type="BioGRID" id="852484">
    <property type="interactions" value="3"/>
</dbReference>
<dbReference type="DIP" id="DIP-11082N"/>
<dbReference type="FunCoup" id="P0AGA6">
    <property type="interactions" value="177"/>
</dbReference>
<dbReference type="IntAct" id="P0AGA6">
    <property type="interactions" value="4"/>
</dbReference>
<dbReference type="STRING" id="511145.b3669"/>
<dbReference type="jPOST" id="P0AGA6"/>
<dbReference type="PaxDb" id="511145-b3669"/>
<dbReference type="EnsemblBacteria" id="AAC76692">
    <property type="protein sequence ID" value="AAC76692"/>
    <property type="gene ID" value="b3669"/>
</dbReference>
<dbReference type="GeneID" id="93778410"/>
<dbReference type="GeneID" id="948178"/>
<dbReference type="KEGG" id="ecj:JW3644"/>
<dbReference type="KEGG" id="eco:b3669"/>
<dbReference type="KEGG" id="ecoc:C3026_19885"/>
<dbReference type="PATRIC" id="fig|1411691.4.peg.3036"/>
<dbReference type="EchoBASE" id="EB1044"/>
<dbReference type="eggNOG" id="COG2197">
    <property type="taxonomic scope" value="Bacteria"/>
</dbReference>
<dbReference type="HOGENOM" id="CLU_000445_90_1_6"/>
<dbReference type="InParanoid" id="P0AGA6"/>
<dbReference type="OMA" id="DHPMWRD"/>
<dbReference type="OrthoDB" id="9796655at2"/>
<dbReference type="PhylomeDB" id="P0AGA6"/>
<dbReference type="BioCyc" id="EcoCyc:UHPA-MONOMER"/>
<dbReference type="PRO" id="PR:P0AGA6"/>
<dbReference type="Proteomes" id="UP000000625">
    <property type="component" value="Chromosome"/>
</dbReference>
<dbReference type="GO" id="GO:0005737">
    <property type="term" value="C:cytoplasm"/>
    <property type="evidence" value="ECO:0007669"/>
    <property type="project" value="UniProtKB-SubCell"/>
</dbReference>
<dbReference type="GO" id="GO:0003677">
    <property type="term" value="F:DNA binding"/>
    <property type="evidence" value="ECO:0000314"/>
    <property type="project" value="EcoCyc"/>
</dbReference>
<dbReference type="GO" id="GO:0000160">
    <property type="term" value="P:phosphorelay signal transduction system"/>
    <property type="evidence" value="ECO:0007669"/>
    <property type="project" value="UniProtKB-KW"/>
</dbReference>
<dbReference type="GO" id="GO:0006355">
    <property type="term" value="P:regulation of DNA-templated transcription"/>
    <property type="evidence" value="ECO:0000315"/>
    <property type="project" value="EcoCyc"/>
</dbReference>
<dbReference type="CDD" id="cd06170">
    <property type="entry name" value="LuxR_C_like"/>
    <property type="match status" value="1"/>
</dbReference>
<dbReference type="CDD" id="cd17535">
    <property type="entry name" value="REC_NarL-like"/>
    <property type="match status" value="1"/>
</dbReference>
<dbReference type="FunFam" id="3.40.50.2300:FF:000040">
    <property type="entry name" value="DNA-binding transcriptional activator UhpA"/>
    <property type="match status" value="1"/>
</dbReference>
<dbReference type="Gene3D" id="3.40.50.2300">
    <property type="match status" value="1"/>
</dbReference>
<dbReference type="InterPro" id="IPR011006">
    <property type="entry name" value="CheY-like_superfamily"/>
</dbReference>
<dbReference type="InterPro" id="IPR016032">
    <property type="entry name" value="Sig_transdc_resp-reg_C-effctor"/>
</dbReference>
<dbReference type="InterPro" id="IPR001789">
    <property type="entry name" value="Sig_transdc_resp-reg_receiver"/>
</dbReference>
<dbReference type="InterPro" id="IPR000792">
    <property type="entry name" value="Tscrpt_reg_LuxR_C"/>
</dbReference>
<dbReference type="InterPro" id="IPR039420">
    <property type="entry name" value="WalR-like"/>
</dbReference>
<dbReference type="NCBIfam" id="NF007685">
    <property type="entry name" value="PRK10360.1"/>
    <property type="match status" value="1"/>
</dbReference>
<dbReference type="PANTHER" id="PTHR43214:SF22">
    <property type="entry name" value="TRANSCRIPTIONAL REGULATORY PROTEIN UHPA"/>
    <property type="match status" value="1"/>
</dbReference>
<dbReference type="PANTHER" id="PTHR43214">
    <property type="entry name" value="TWO-COMPONENT RESPONSE REGULATOR"/>
    <property type="match status" value="1"/>
</dbReference>
<dbReference type="Pfam" id="PF00196">
    <property type="entry name" value="GerE"/>
    <property type="match status" value="1"/>
</dbReference>
<dbReference type="Pfam" id="PF00072">
    <property type="entry name" value="Response_reg"/>
    <property type="match status" value="1"/>
</dbReference>
<dbReference type="PRINTS" id="PR00038">
    <property type="entry name" value="HTHLUXR"/>
</dbReference>
<dbReference type="SMART" id="SM00421">
    <property type="entry name" value="HTH_LUXR"/>
    <property type="match status" value="1"/>
</dbReference>
<dbReference type="SMART" id="SM00448">
    <property type="entry name" value="REC"/>
    <property type="match status" value="1"/>
</dbReference>
<dbReference type="SUPFAM" id="SSF46894">
    <property type="entry name" value="C-terminal effector domain of the bipartite response regulators"/>
    <property type="match status" value="1"/>
</dbReference>
<dbReference type="SUPFAM" id="SSF52172">
    <property type="entry name" value="CheY-like"/>
    <property type="match status" value="1"/>
</dbReference>
<dbReference type="PROSITE" id="PS00622">
    <property type="entry name" value="HTH_LUXR_1"/>
    <property type="match status" value="1"/>
</dbReference>
<dbReference type="PROSITE" id="PS50043">
    <property type="entry name" value="HTH_LUXR_2"/>
    <property type="match status" value="1"/>
</dbReference>
<dbReference type="PROSITE" id="PS50110">
    <property type="entry name" value="RESPONSE_REGULATORY"/>
    <property type="match status" value="1"/>
</dbReference>
<sequence length="196" mass="20889">MITVALIDDHLIVRSGFAQLLGLEPDLQVVAEFGSGREALAGLPGRGVQVCICDISMPDISGLELLSQLPKGMATIMLSVHDSPALVEQALNAGARGFLSKRCSPDELIAAVHTVATGGCYLTPDIAIKLASGRQDPLTKRERQVAEKLAQGMAVKEIAAELGLSPKTVHVHRANLMEKLGVSNDVELARRMFDGW</sequence>
<protein>
    <recommendedName>
        <fullName evidence="7">Transcriptional regulatory protein UhpA</fullName>
    </recommendedName>
</protein>
<name>UHPA_ECOLI</name>
<organism>
    <name type="scientific">Escherichia coli (strain K12)</name>
    <dbReference type="NCBI Taxonomy" id="83333"/>
    <lineage>
        <taxon>Bacteria</taxon>
        <taxon>Pseudomonadati</taxon>
        <taxon>Pseudomonadota</taxon>
        <taxon>Gammaproteobacteria</taxon>
        <taxon>Enterobacterales</taxon>
        <taxon>Enterobacteriaceae</taxon>
        <taxon>Escherichia</taxon>
    </lineage>
</organism>
<evidence type="ECO:0000255" key="1">
    <source>
        <dbReference type="PROSITE-ProRule" id="PRU00169"/>
    </source>
</evidence>
<evidence type="ECO:0000255" key="2">
    <source>
        <dbReference type="PROSITE-ProRule" id="PRU00411"/>
    </source>
</evidence>
<evidence type="ECO:0000269" key="3">
    <source>
    </source>
</evidence>
<evidence type="ECO:0000269" key="4">
    <source>
    </source>
</evidence>
<evidence type="ECO:0000269" key="5">
    <source>
    </source>
</evidence>
<evidence type="ECO:0000269" key="6">
    <source>
    </source>
</evidence>
<evidence type="ECO:0000305" key="7"/>
<gene>
    <name type="primary">uhpA</name>
    <name type="ordered locus">b3669</name>
    <name type="ordered locus">JW3644</name>
</gene>
<keyword id="KW-0010">Activator</keyword>
<keyword id="KW-0963">Cytoplasm</keyword>
<keyword id="KW-0903">Direct protein sequencing</keyword>
<keyword id="KW-0238">DNA-binding</keyword>
<keyword id="KW-0597">Phosphoprotein</keyword>
<keyword id="KW-1185">Reference proteome</keyword>
<keyword id="KW-0804">Transcription</keyword>
<keyword id="KW-0805">Transcription regulation</keyword>
<keyword id="KW-0902">Two-component regulatory system</keyword>
<proteinExistence type="evidence at protein level"/>
<comment type="function">
    <text evidence="5 6">Part of the UhpABC signaling cascade that controls the expression of the hexose phosphate transporter UhpT. Activates the transcription of the uhpT gene. Acts by binding specifically to the uhpT promoter region.</text>
</comment>
<comment type="activity regulation">
    <text evidence="6">Phosphorylation by UhpB enhances DNA binding activity.</text>
</comment>
<comment type="subcellular location">
    <subcellularLocation>
        <location evidence="7">Cytoplasm</location>
    </subcellularLocation>
</comment>
<comment type="PTM">
    <text evidence="3 4">Phosphorylated and dephosphorylated by UhpB.</text>
</comment>